<comment type="function">
    <text evidence="13 14 15 16">Transcription regulator involved in inner cell mass and embryonic stem (ES) cells proliferation and self-renewal. Imposes pluripotency on ES cells and prevents their differentiation towards extraembryonic endoderm and trophectoderm lineages. Blocks bone morphogenetic protein-induced mesoderm differentiation of ES cells by physically interacting with SMAD1 and interfering with the recruitment of coactivators to the active SMAD transcriptional complexes. Acts as a transcriptional activator or repressor. Binds optimally to the DNA consensus sequence 5'-TAAT[GT][GT]-3' or 5'-[CG][GA][CG]C[GC]ATTAN[GC]-3'. Binds to the POU5F1/OCT4 promoter (PubMed:25825768). Able to autorepress its expression in differentiating (ES) cells: binds to its own promoter following interaction with ZNF281/ZFP281, leading to recruitment of the NuRD complex and subsequent repression of expression. When overexpressed, promotes cells to enter into S phase and proliferation.</text>
</comment>
<comment type="subunit">
    <text evidence="2 17">Interacts with SMAD1 (By similarity). Interacts with SALL4 (By similarity). Interacts with ZNF281/ZFP281 (By similarity). Interacts with PCGF1 (PubMed:26687479). Interacts with ESRRB; reciprocally modulates their transcriptional activities (By similarity). Interacts with NSD2 (By similarity).</text>
</comment>
<comment type="subcellular location">
    <subcellularLocation>
        <location evidence="3 13">Nucleus</location>
    </subcellularLocation>
</comment>
<comment type="alternative products">
    <event type="alternative splicing"/>
    <isoform>
        <id>Q9H9S0-1</id>
        <name>1</name>
        <sequence type="displayed"/>
    </isoform>
    <isoform>
        <id>Q9H9S0-2</id>
        <name>2</name>
        <name>Nanog-delta 48</name>
        <sequence type="described" ref="VSP_021688"/>
    </isoform>
</comment>
<comment type="tissue specificity">
    <text evidence="5 6 8 12 15">Expressed in testicular carcinoma and derived germ cell tumors (at protein level). Expressed in fetal gonads, ovary and testis. Also expressed in ovary teratocarcinoma cell line and testicular embryonic carcinoma. Not expressed in many somatic organs and oocytes.</text>
</comment>
<comment type="developmental stage">
    <text evidence="9 11 12 13 15">Expressed in embryonic stem (ES) and carcinoma (EC) cells. Expressed in inner cell mass (ICM) of the blastocyst and gonocytes between 14 and 19 weeks of gestation (at protein level). Not expressed in oocytes, unfertilized oocytes, 2-16 cell embryos and early morula (at protein level). Expressed in embryonic stem cells (ES). Expression decreases with ES differentiation.</text>
</comment>
<comment type="miscellaneous">
    <text>Exists an other tandem duplicated non-processed pseudogene (NANOGP1) and 10 other NANOG-related nucleotide sequences located on different chromosomes, all of which are processed pseudogenes lacking introns (NANOGP2 to NANOGP11); except NANOGP8 which is a retrogene.</text>
</comment>
<comment type="similarity">
    <text evidence="20">Belongs to the Nanog homeobox family.</text>
</comment>
<comment type="online information" name="Wikipedia">
    <link uri="https://en.wikipedia.org/wiki/Nanog"/>
    <text>Nanog entry</text>
</comment>
<comment type="online information" name="Atlas of Genetics and Cytogenetics in Oncology and Haematology">
    <link uri="https://atlasgeneticsoncology.org/gene/46540/NANOG"/>
</comment>
<protein>
    <recommendedName>
        <fullName>Homeobox protein NANOG</fullName>
    </recommendedName>
    <alternativeName>
        <fullName>Homeobox transcription factor Nanog</fullName>
        <shortName>hNanog</shortName>
    </alternativeName>
</protein>
<reference key="1">
    <citation type="journal article" date="2003" name="Cell">
        <title>The homeoprotein Nanog is required for maintenance of pluripotency in mouse epiblast and ES cells.</title>
        <authorList>
            <person name="Mitsui K."/>
            <person name="Tokuzawa Y."/>
            <person name="Itoh H."/>
            <person name="Segawa K."/>
            <person name="Murakami M."/>
            <person name="Takahashi K."/>
            <person name="Maruyama M."/>
            <person name="Maeda M."/>
            <person name="Yamanaka S."/>
        </authorList>
    </citation>
    <scope>NUCLEOTIDE SEQUENCE [MRNA] (ISOFORM 1)</scope>
    <scope>VARIANT ASN-82</scope>
    <scope>TISSUE SPECIFICITY</scope>
    <source>
        <tissue>Embryonic stem cell</tissue>
    </source>
</reference>
<reference key="2">
    <citation type="journal article" date="2004" name="Stem Cells">
        <title>Human STELLAR, NANOG, and GDF3 genes are expressed in pluripotent cells and map to chromosome 12p13, a hotspot for teratocarcinoma.</title>
        <authorList>
            <person name="Clark A.T."/>
            <person name="Rodriguez R.T."/>
            <person name="Bodnar M.S."/>
            <person name="Abeyta M.J."/>
            <person name="Cedars M.I."/>
            <person name="Turek P.J."/>
            <person name="Firpo M.T."/>
            <person name="Reijo Pera R.A."/>
        </authorList>
    </citation>
    <scope>NUCLEOTIDE SEQUENCE [MRNA] (ISOFORM 1)</scope>
    <scope>TISSUE SPECIFICITY</scope>
    <source>
        <tissue>Embryonic stem cell</tissue>
    </source>
</reference>
<reference key="3">
    <citation type="journal article" date="2005" name="Exp. Mol. Med.">
        <title>Identification and functional characterization of an alternative splice variant within the fourth exon of human nanog.</title>
        <authorList>
            <person name="Kim J.S."/>
            <person name="Kim J."/>
            <person name="Kim B.S."/>
            <person name="Chung H.Y."/>
            <person name="Lee Y.Y."/>
            <person name="Park C.-S."/>
            <person name="Lee Y.S."/>
            <person name="Lee Y.H."/>
            <person name="Chung I.Y."/>
        </authorList>
    </citation>
    <scope>NUCLEOTIDE SEQUENCE [MRNA] (ISOFORMS 1 AND 2)</scope>
    <scope>FUNCTION</scope>
    <scope>DNA-BINDING</scope>
    <scope>TISSUE SPECIFICITY</scope>
    <scope>DEVELOPMENTAL STAGE</scope>
    <source>
        <tissue>Embryonic stem cell</tissue>
    </source>
</reference>
<reference key="4">
    <citation type="journal article" date="2004" name="Nat. Genet.">
        <title>Complete sequencing and characterization of 21,243 full-length human cDNAs.</title>
        <authorList>
            <person name="Ota T."/>
            <person name="Suzuki Y."/>
            <person name="Nishikawa T."/>
            <person name="Otsuki T."/>
            <person name="Sugiyama T."/>
            <person name="Irie R."/>
            <person name="Wakamatsu A."/>
            <person name="Hayashi K."/>
            <person name="Sato H."/>
            <person name="Nagai K."/>
            <person name="Kimura K."/>
            <person name="Makita H."/>
            <person name="Sekine M."/>
            <person name="Obayashi M."/>
            <person name="Nishi T."/>
            <person name="Shibahara T."/>
            <person name="Tanaka T."/>
            <person name="Ishii S."/>
            <person name="Yamamoto J."/>
            <person name="Saito K."/>
            <person name="Kawai Y."/>
            <person name="Isono Y."/>
            <person name="Nakamura Y."/>
            <person name="Nagahari K."/>
            <person name="Murakami K."/>
            <person name="Yasuda T."/>
            <person name="Iwayanagi T."/>
            <person name="Wagatsuma M."/>
            <person name="Shiratori A."/>
            <person name="Sudo H."/>
            <person name="Hosoiri T."/>
            <person name="Kaku Y."/>
            <person name="Kodaira H."/>
            <person name="Kondo H."/>
            <person name="Sugawara M."/>
            <person name="Takahashi M."/>
            <person name="Kanda K."/>
            <person name="Yokoi T."/>
            <person name="Furuya T."/>
            <person name="Kikkawa E."/>
            <person name="Omura Y."/>
            <person name="Abe K."/>
            <person name="Kamihara K."/>
            <person name="Katsuta N."/>
            <person name="Sato K."/>
            <person name="Tanikawa M."/>
            <person name="Yamazaki M."/>
            <person name="Ninomiya K."/>
            <person name="Ishibashi T."/>
            <person name="Yamashita H."/>
            <person name="Murakawa K."/>
            <person name="Fujimori K."/>
            <person name="Tanai H."/>
            <person name="Kimata M."/>
            <person name="Watanabe M."/>
            <person name="Hiraoka S."/>
            <person name="Chiba Y."/>
            <person name="Ishida S."/>
            <person name="Ono Y."/>
            <person name="Takiguchi S."/>
            <person name="Watanabe S."/>
            <person name="Yosida M."/>
            <person name="Hotuta T."/>
            <person name="Kusano J."/>
            <person name="Kanehori K."/>
            <person name="Takahashi-Fujii A."/>
            <person name="Hara H."/>
            <person name="Tanase T.-O."/>
            <person name="Nomura Y."/>
            <person name="Togiya S."/>
            <person name="Komai F."/>
            <person name="Hara R."/>
            <person name="Takeuchi K."/>
            <person name="Arita M."/>
            <person name="Imose N."/>
            <person name="Musashino K."/>
            <person name="Yuuki H."/>
            <person name="Oshima A."/>
            <person name="Sasaki N."/>
            <person name="Aotsuka S."/>
            <person name="Yoshikawa Y."/>
            <person name="Matsunawa H."/>
            <person name="Ichihara T."/>
            <person name="Shiohata N."/>
            <person name="Sano S."/>
            <person name="Moriya S."/>
            <person name="Momiyama H."/>
            <person name="Satoh N."/>
            <person name="Takami S."/>
            <person name="Terashima Y."/>
            <person name="Suzuki O."/>
            <person name="Nakagawa S."/>
            <person name="Senoh A."/>
            <person name="Mizoguchi H."/>
            <person name="Goto Y."/>
            <person name="Shimizu F."/>
            <person name="Wakebe H."/>
            <person name="Hishigaki H."/>
            <person name="Watanabe T."/>
            <person name="Sugiyama A."/>
            <person name="Takemoto M."/>
            <person name="Kawakami B."/>
            <person name="Yamazaki M."/>
            <person name="Watanabe K."/>
            <person name="Kumagai A."/>
            <person name="Itakura S."/>
            <person name="Fukuzumi Y."/>
            <person name="Fujimori Y."/>
            <person name="Komiyama M."/>
            <person name="Tashiro H."/>
            <person name="Tanigami A."/>
            <person name="Fujiwara T."/>
            <person name="Ono T."/>
            <person name="Yamada K."/>
            <person name="Fujii Y."/>
            <person name="Ozaki K."/>
            <person name="Hirao M."/>
            <person name="Ohmori Y."/>
            <person name="Kawabata A."/>
            <person name="Hikiji T."/>
            <person name="Kobatake N."/>
            <person name="Inagaki H."/>
            <person name="Ikema Y."/>
            <person name="Okamoto S."/>
            <person name="Okitani R."/>
            <person name="Kawakami T."/>
            <person name="Noguchi S."/>
            <person name="Itoh T."/>
            <person name="Shigeta K."/>
            <person name="Senba T."/>
            <person name="Matsumura K."/>
            <person name="Nakajima Y."/>
            <person name="Mizuno T."/>
            <person name="Morinaga M."/>
            <person name="Sasaki M."/>
            <person name="Togashi T."/>
            <person name="Oyama M."/>
            <person name="Hata H."/>
            <person name="Watanabe M."/>
            <person name="Komatsu T."/>
            <person name="Mizushima-Sugano J."/>
            <person name="Satoh T."/>
            <person name="Shirai Y."/>
            <person name="Takahashi Y."/>
            <person name="Nakagawa K."/>
            <person name="Okumura K."/>
            <person name="Nagase T."/>
            <person name="Nomura N."/>
            <person name="Kikuchi H."/>
            <person name="Masuho Y."/>
            <person name="Yamashita R."/>
            <person name="Nakai K."/>
            <person name="Yada T."/>
            <person name="Nakamura Y."/>
            <person name="Ohara O."/>
            <person name="Isogai T."/>
            <person name="Sugano S."/>
        </authorList>
    </citation>
    <scope>NUCLEOTIDE SEQUENCE [LARGE SCALE MRNA] (ISOFORM 1)</scope>
    <scope>VARIANT ASN-82</scope>
    <source>
        <tissue>Teratocarcinoma</tissue>
    </source>
</reference>
<reference key="5">
    <citation type="submission" date="2005-09" db="EMBL/GenBank/DDBJ databases">
        <authorList>
            <person name="Mural R.J."/>
            <person name="Istrail S."/>
            <person name="Sutton G.G."/>
            <person name="Florea L."/>
            <person name="Halpern A.L."/>
            <person name="Mobarry C.M."/>
            <person name="Lippert R."/>
            <person name="Walenz B."/>
            <person name="Shatkay H."/>
            <person name="Dew I."/>
            <person name="Miller J.R."/>
            <person name="Flanigan M.J."/>
            <person name="Edwards N.J."/>
            <person name="Bolanos R."/>
            <person name="Fasulo D."/>
            <person name="Halldorsson B.V."/>
            <person name="Hannenhalli S."/>
            <person name="Turner R."/>
            <person name="Yooseph S."/>
            <person name="Lu F."/>
            <person name="Nusskern D.R."/>
            <person name="Shue B.C."/>
            <person name="Zheng X.H."/>
            <person name="Zhong F."/>
            <person name="Delcher A.L."/>
            <person name="Huson D.H."/>
            <person name="Kravitz S.A."/>
            <person name="Mouchard L."/>
            <person name="Reinert K."/>
            <person name="Remington K.A."/>
            <person name="Clark A.G."/>
            <person name="Waterman M.S."/>
            <person name="Eichler E.E."/>
            <person name="Adams M.D."/>
            <person name="Hunkapiller M.W."/>
            <person name="Myers E.W."/>
            <person name="Venter J.C."/>
        </authorList>
    </citation>
    <scope>NUCLEOTIDE SEQUENCE [LARGE SCALE GENOMIC DNA]</scope>
    <scope>VARIANT ASN-82</scope>
</reference>
<reference key="6">
    <citation type="journal article" date="2003" name="Cell">
        <title>Functional expression cloning of Nanog, a pluripotency sustaining factor in embryonic stem cells.</title>
        <authorList>
            <person name="Chambers I."/>
            <person name="Colby D."/>
            <person name="Robertson M."/>
            <person name="Nichols J."/>
            <person name="Lee S."/>
            <person name="Tweedie S."/>
            <person name="Smith A."/>
        </authorList>
    </citation>
    <scope>TISSUE SPECIFICITY</scope>
</reference>
<reference key="7">
    <citation type="journal article" date="2004" name="Dev. Dyn.">
        <title>Identification, cloning and expression analysis of the pluripotency promoting Nanog genes in mouse and human.</title>
        <authorList>
            <person name="Hart A.H."/>
            <person name="Hartley L."/>
            <person name="Ibrahim M."/>
            <person name="Robb L."/>
        </authorList>
    </citation>
    <scope>DEVELOPMENTAL STAGE</scope>
</reference>
<reference key="8">
    <citation type="journal article" date="2005" name="Exp. Mol. Med.">
        <title>Identification of a putative transactivation domain in human Nanog.</title>
        <authorList>
            <person name="Oh J.-H."/>
            <person name="Do H.-J."/>
            <person name="Yang H.-M."/>
            <person name="Moon S.-Y."/>
            <person name="Cha K.-Y."/>
            <person name="Chung H.-M."/>
            <person name="Kim J.-H."/>
        </authorList>
    </citation>
    <scope>FUNCTION</scope>
</reference>
<reference key="9">
    <citation type="journal article" date="2005" name="Histopathology">
        <title>Stem cell pluripotency factor NANOG is expressed in human fetal gonocytes, testicular carcinoma in situ and germ cell tumours.</title>
        <authorList>
            <person name="Hoei-Hansen C.E."/>
            <person name="Almstrup K."/>
            <person name="Nielsen J.E."/>
            <person name="Brask Sonne S."/>
            <person name="Graem N."/>
            <person name="Skakkebaek N.E."/>
            <person name="Leffers H."/>
            <person name="Rajpert-De Meyts E."/>
        </authorList>
    </citation>
    <scope>DEVELOPMENTAL STAGE</scope>
    <scope>TISSUE SPECIFICITY</scope>
</reference>
<reference key="10">
    <citation type="journal article" date="2005" name="Mech. Dev.">
        <title>Pluripotential competence of cells associated with Nanog activity.</title>
        <authorList>
            <person name="Hatano S.Y."/>
            <person name="Tada M."/>
            <person name="Kimura H."/>
            <person name="Yamaguchi S."/>
            <person name="Kono T."/>
            <person name="Nakano T."/>
            <person name="Suemori H."/>
            <person name="Nakatsuji N."/>
            <person name="Tada T."/>
        </authorList>
    </citation>
    <scope>DEVELOPMENTAL STAGE</scope>
</reference>
<reference key="11">
    <citation type="journal article" date="2005" name="Stem Cells">
        <title>Downregulation of NANOG induces differentiation of human embryonic stem cells to extraembryonic lineages.</title>
        <authorList>
            <person name="Hyslop L.A."/>
            <person name="Stojkovic M."/>
            <person name="Armstrong L."/>
            <person name="Walter T."/>
            <person name="Stojkovic P."/>
            <person name="Przyborski S."/>
            <person name="Herbert M."/>
            <person name="Murdoch A."/>
            <person name="Strachan T."/>
            <person name="Lako M."/>
        </authorList>
    </citation>
    <scope>FUNCTION</scope>
    <scope>SUBCELLULAR LOCATION</scope>
    <scope>DEVELOPMENTAL STAGE</scope>
</reference>
<reference key="12">
    <citation type="journal article" date="2015" name="Sci. Rep.">
        <title>The variant Polycomb Repressor Complex 1 component PCGF1 interacts with a pluripotency sub-network that includes DPPA4, a regulator of embryogenesis.</title>
        <authorList>
            <person name="Oliviero G."/>
            <person name="Munawar N."/>
            <person name="Watson A."/>
            <person name="Streubel G."/>
            <person name="Manning G."/>
            <person name="Bardwell V."/>
            <person name="Bracken A.P."/>
            <person name="Cagney G."/>
        </authorList>
    </citation>
    <scope>IDENTIFICATION BY MASS SPECTROMETRY</scope>
    <scope>INTERACTION WITH PCGF1</scope>
</reference>
<reference key="13">
    <citation type="submission" date="2010-03" db="PDB data bank">
        <title>Solution structure of human stem cell transcription factor NANOG.</title>
        <authorList>
            <consortium name="Center for eukaryotic structural genomics (CESG)"/>
        </authorList>
    </citation>
    <scope>STRUCTURE BY NMR OF 75-157</scope>
</reference>
<reference key="14">
    <citation type="journal article" date="2015" name="Proc. Natl. Acad. Sci. U.S.A.">
        <title>Structure-based discovery of NANOG variant with enhanced properties to promote self-renewal and reprogramming of pluripotent stem cells.</title>
        <authorList>
            <person name="Hayashi Y."/>
            <person name="Caboni L."/>
            <person name="Das D."/>
            <person name="Yumoto F."/>
            <person name="Clayton T."/>
            <person name="Deller M.C."/>
            <person name="Nguyen P."/>
            <person name="Farr C.L."/>
            <person name="Chiu H.J."/>
            <person name="Miller M.D."/>
            <person name="Elsliger M.A."/>
            <person name="Deacon A.M."/>
            <person name="Godzik A."/>
            <person name="Lesley S.A."/>
            <person name="Tomoda K."/>
            <person name="Conklin B.R."/>
            <person name="Wilson I.A."/>
            <person name="Yamanaka S."/>
            <person name="Fletterick R.J."/>
        </authorList>
    </citation>
    <scope>X-RAY CRYSTALLOGRAPHY (3.30 ANGSTROMS) OF 94-162 IN COMPLEX WITH DNA</scope>
    <scope>DNA-BINDING</scope>
    <scope>MUTAGENESIS OF PHE-102; LEU-122; GLN-124; MET-125; TYR-136; LYS-137; LYS-140; THR-141; GLN-144; ASN-145; ARG-147; MET-148 AND LYS-151</scope>
    <scope>FUNCTION</scope>
</reference>
<reference key="15">
    <citation type="journal article" date="2004" name="Genomics">
        <title>Eleven daughters of NANOG.</title>
        <authorList>
            <person name="Booth H.A."/>
            <person name="Holland P.W."/>
        </authorList>
    </citation>
    <scope>VARIANT ASN-82</scope>
</reference>
<feature type="chain" id="PRO_0000261418" description="Homeobox protein NANOG">
    <location>
        <begin position="1"/>
        <end position="305"/>
    </location>
</feature>
<feature type="repeat" description="1">
    <location>
        <begin position="196"/>
        <end position="200"/>
    </location>
</feature>
<feature type="repeat" description="2">
    <location>
        <begin position="201"/>
        <end position="205"/>
    </location>
</feature>
<feature type="repeat" description="3">
    <location>
        <begin position="206"/>
        <end position="210"/>
    </location>
</feature>
<feature type="repeat" description="4">
    <location>
        <begin position="216"/>
        <end position="220"/>
    </location>
</feature>
<feature type="repeat" description="5">
    <location>
        <begin position="221"/>
        <end position="225"/>
    </location>
</feature>
<feature type="repeat" description="6">
    <location>
        <begin position="226"/>
        <end position="230"/>
    </location>
</feature>
<feature type="repeat" description="7">
    <location>
        <begin position="231"/>
        <end position="235"/>
    </location>
</feature>
<feature type="repeat" description="8">
    <location>
        <begin position="236"/>
        <end position="240"/>
    </location>
</feature>
<feature type="DNA-binding region" description="Homeobox" evidence="3">
    <location>
        <begin position="95"/>
        <end position="154"/>
    </location>
</feature>
<feature type="region of interest" description="Disordered" evidence="4">
    <location>
        <begin position="1"/>
        <end position="96"/>
    </location>
</feature>
<feature type="region of interest" description="Required for DNA-binding" evidence="16">
    <location>
        <begin position="122"/>
        <end position="151"/>
    </location>
</feature>
<feature type="region of interest" description="8 X repeats starting with a Trp in each unit">
    <location>
        <begin position="196"/>
        <end position="240"/>
    </location>
</feature>
<feature type="region of interest" description="Sufficient for transactivation activity" evidence="1">
    <location>
        <begin position="196"/>
        <end position="240"/>
    </location>
</feature>
<feature type="region of interest" description="Sufficient for strong transactivation activity" evidence="1">
    <location>
        <begin position="241"/>
        <end position="305"/>
    </location>
</feature>
<feature type="compositionally biased region" description="Polar residues" evidence="4">
    <location>
        <begin position="65"/>
        <end position="81"/>
    </location>
</feature>
<feature type="compositionally biased region" description="Basic and acidic residues" evidence="4">
    <location>
        <begin position="83"/>
        <end position="92"/>
    </location>
</feature>
<feature type="splice variant" id="VSP_021688" description="In isoform 2." evidence="19">
    <location>
        <begin position="168"/>
        <end position="183"/>
    </location>
</feature>
<feature type="sequence variant" id="VAR_029384" description="In dbSNP:rs2889551." evidence="5 7 10 18">
    <original>K</original>
    <variation>N</variation>
    <location>
        <position position="82"/>
    </location>
</feature>
<feature type="mutagenesis site" description="No effect on POU5F1 promoter DNA-binding." evidence="16">
    <original>F</original>
    <variation>A</variation>
    <location>
        <position position="102"/>
    </location>
</feature>
<feature type="mutagenesis site" description="Increased POU5F1 promoter DNA-binding and protein stability." evidence="16">
    <original>L</original>
    <variation>A</variation>
    <location>
        <position position="122"/>
    </location>
</feature>
<feature type="mutagenesis site" description="Decreased POU5F1 promoter DNA-binding and protein stability." evidence="16">
    <original>Q</original>
    <variation>A</variation>
    <location>
        <position position="124"/>
    </location>
</feature>
<feature type="mutagenesis site" description="Decreased POU5F1 promoter DNA-binding and protein stability." evidence="16">
    <original>M</original>
    <variation>A</variation>
    <location>
        <position position="125"/>
    </location>
</feature>
<feature type="mutagenesis site" description="Decreased POU5F1 promoter DNA-binding and protein stability." evidence="16">
    <original>Y</original>
    <variation>A</variation>
    <location>
        <position position="136"/>
    </location>
</feature>
<feature type="mutagenesis site" description="Inhibits POU5F1 promoter DNA-binding." evidence="16">
    <original>K</original>
    <variation>A</variation>
    <location>
        <position position="137"/>
    </location>
</feature>
<feature type="mutagenesis site" description="Decreased POU5F1 promoter DNA-binding and protein stability." evidence="16">
    <original>K</original>
    <variation>A</variation>
    <location>
        <position position="140"/>
    </location>
</feature>
<feature type="mutagenesis site" description="Inhibits POU5F1 promoter DNA-binding." evidence="16">
    <original>T</original>
    <variation>A</variation>
    <location>
        <position position="141"/>
    </location>
</feature>
<feature type="mutagenesis site" description="No effect on POU5F1 promoter DNA-binding. Decreased protein stability." evidence="16">
    <original>Q</original>
    <variation>A</variation>
    <location>
        <position position="144"/>
    </location>
</feature>
<feature type="mutagenesis site" description="Inhibits POU5F1 promoter DNA-binding." evidence="16">
    <original>N</original>
    <variation>A</variation>
    <location>
        <position position="145"/>
    </location>
</feature>
<feature type="mutagenesis site" description="Inhibits POU5F1 promoter DNA-binding." evidence="16">
    <original>R</original>
    <variation>A</variation>
    <location>
        <position position="147"/>
    </location>
</feature>
<feature type="mutagenesis site" description="No effect on POU5F1 promoter DNA-binding. Increased protein stability." evidence="16">
    <original>M</original>
    <variation>A</variation>
    <location>
        <position position="148"/>
    </location>
</feature>
<feature type="mutagenesis site" description="Decreased POU5F1 promoter DNA-binding and protein stability." evidence="16">
    <original>K</original>
    <variation>A</variation>
    <location>
        <position position="151"/>
    </location>
</feature>
<feature type="helix" evidence="22">
    <location>
        <begin position="104"/>
        <end position="116"/>
    </location>
</feature>
<feature type="strand" evidence="21">
    <location>
        <begin position="117"/>
        <end position="119"/>
    </location>
</feature>
<feature type="helix" evidence="22">
    <location>
        <begin position="122"/>
        <end position="131"/>
    </location>
</feature>
<feature type="helix" evidence="22">
    <location>
        <begin position="136"/>
        <end position="152"/>
    </location>
</feature>
<keyword id="KW-0002">3D-structure</keyword>
<keyword id="KW-0010">Activator</keyword>
<keyword id="KW-0025">Alternative splicing</keyword>
<keyword id="KW-0217">Developmental protein</keyword>
<keyword id="KW-0238">DNA-binding</keyword>
<keyword id="KW-0371">Homeobox</keyword>
<keyword id="KW-0539">Nucleus</keyword>
<keyword id="KW-1185">Reference proteome</keyword>
<keyword id="KW-0677">Repeat</keyword>
<keyword id="KW-0678">Repressor</keyword>
<keyword id="KW-0804">Transcription</keyword>
<keyword id="KW-0805">Transcription regulation</keyword>
<dbReference type="EMBL" id="AB093576">
    <property type="protein sequence ID" value="BAC76999.1"/>
    <property type="molecule type" value="mRNA"/>
</dbReference>
<dbReference type="EMBL" id="AY230262">
    <property type="protein sequence ID" value="AAP49529.1"/>
    <property type="molecule type" value="mRNA"/>
</dbReference>
<dbReference type="EMBL" id="AY578089">
    <property type="protein sequence ID" value="AAT81526.1"/>
    <property type="molecule type" value="mRNA"/>
</dbReference>
<dbReference type="EMBL" id="AK022643">
    <property type="protein sequence ID" value="BAB14151.1"/>
    <property type="molecule type" value="mRNA"/>
</dbReference>
<dbReference type="EMBL" id="CH471116">
    <property type="protein sequence ID" value="EAW88649.1"/>
    <property type="molecule type" value="Genomic_DNA"/>
</dbReference>
<dbReference type="EMBL" id="CH471116">
    <property type="protein sequence ID" value="EAW88651.1"/>
    <property type="molecule type" value="Genomic_DNA"/>
</dbReference>
<dbReference type="CCDS" id="CCDS31736.1">
    <molecule id="Q9H9S0-1"/>
</dbReference>
<dbReference type="CCDS" id="CCDS73436.1">
    <molecule id="Q9H9S0-2"/>
</dbReference>
<dbReference type="RefSeq" id="NP_001284627.1">
    <molecule id="Q9H9S0-2"/>
    <property type="nucleotide sequence ID" value="NM_001297698.2"/>
</dbReference>
<dbReference type="RefSeq" id="NP_079141.2">
    <molecule id="Q9H9S0-1"/>
    <property type="nucleotide sequence ID" value="NM_024865.4"/>
</dbReference>
<dbReference type="PDB" id="2KT0">
    <property type="method" value="NMR"/>
    <property type="chains" value="A=75-157"/>
</dbReference>
<dbReference type="PDB" id="4RBO">
    <property type="method" value="X-ray"/>
    <property type="resolution" value="3.30 A"/>
    <property type="chains" value="A/D=94-162"/>
</dbReference>
<dbReference type="PDBsum" id="2KT0"/>
<dbReference type="PDBsum" id="4RBO"/>
<dbReference type="BMRB" id="Q9H9S0"/>
<dbReference type="SMR" id="Q9H9S0"/>
<dbReference type="BioGRID" id="123000">
    <property type="interactions" value="241"/>
</dbReference>
<dbReference type="CORUM" id="Q9H9S0"/>
<dbReference type="FunCoup" id="Q9H9S0">
    <property type="interactions" value="583"/>
</dbReference>
<dbReference type="IntAct" id="Q9H9S0">
    <property type="interactions" value="3"/>
</dbReference>
<dbReference type="MINT" id="Q9H9S0"/>
<dbReference type="STRING" id="9606.ENSP00000229307"/>
<dbReference type="ChEMBL" id="CHEMBL3580527"/>
<dbReference type="iPTMnet" id="Q9H9S0"/>
<dbReference type="PhosphoSitePlus" id="Q9H9S0"/>
<dbReference type="BioMuta" id="NANOG"/>
<dbReference type="DMDM" id="118573073"/>
<dbReference type="jPOST" id="Q9H9S0"/>
<dbReference type="MassIVE" id="Q9H9S0"/>
<dbReference type="PaxDb" id="9606-ENSP00000229307"/>
<dbReference type="PeptideAtlas" id="Q9H9S0"/>
<dbReference type="Antibodypedia" id="4521">
    <property type="antibodies" value="1316 antibodies from 49 providers"/>
</dbReference>
<dbReference type="CPTC" id="Q9H9S0">
    <property type="antibodies" value="3 antibodies"/>
</dbReference>
<dbReference type="DNASU" id="79923"/>
<dbReference type="Ensembl" id="ENST00000229307.9">
    <molecule id="Q9H9S0-1"/>
    <property type="protein sequence ID" value="ENSP00000229307.4"/>
    <property type="gene ID" value="ENSG00000111704.11"/>
</dbReference>
<dbReference type="Ensembl" id="ENST00000526286.1">
    <molecule id="Q9H9S0-2"/>
    <property type="protein sequence ID" value="ENSP00000435288.1"/>
    <property type="gene ID" value="ENSG00000111704.11"/>
</dbReference>
<dbReference type="GeneID" id="79923"/>
<dbReference type="KEGG" id="hsa:79923"/>
<dbReference type="MANE-Select" id="ENST00000229307.9">
    <property type="protein sequence ID" value="ENSP00000229307.4"/>
    <property type="RefSeq nucleotide sequence ID" value="NM_024865.4"/>
    <property type="RefSeq protein sequence ID" value="NP_079141.2"/>
</dbReference>
<dbReference type="UCSC" id="uc009zfy.2">
    <molecule id="Q9H9S0-1"/>
    <property type="organism name" value="human"/>
</dbReference>
<dbReference type="AGR" id="HGNC:20857"/>
<dbReference type="CTD" id="79923"/>
<dbReference type="DisGeNET" id="79923"/>
<dbReference type="GeneCards" id="NANOG"/>
<dbReference type="HGNC" id="HGNC:20857">
    <property type="gene designation" value="NANOG"/>
</dbReference>
<dbReference type="HPA" id="ENSG00000111704">
    <property type="expression patterns" value="Not detected"/>
</dbReference>
<dbReference type="MIM" id="607937">
    <property type="type" value="gene"/>
</dbReference>
<dbReference type="neXtProt" id="NX_Q9H9S0"/>
<dbReference type="OpenTargets" id="ENSG00000111704"/>
<dbReference type="PharmGKB" id="PA134864904"/>
<dbReference type="VEuPathDB" id="HostDB:ENSG00000111704"/>
<dbReference type="eggNOG" id="KOG0491">
    <property type="taxonomic scope" value="Eukaryota"/>
</dbReference>
<dbReference type="GeneTree" id="ENSGT00670000098076"/>
<dbReference type="HOGENOM" id="CLU_086240_0_0_1"/>
<dbReference type="InParanoid" id="Q9H9S0"/>
<dbReference type="OMA" id="AWSNHSW"/>
<dbReference type="OrthoDB" id="6159439at2759"/>
<dbReference type="PAN-GO" id="Q9H9S0">
    <property type="GO annotations" value="3 GO annotations based on evolutionary models"/>
</dbReference>
<dbReference type="PhylomeDB" id="Q9H9S0"/>
<dbReference type="TreeFam" id="TF337402"/>
<dbReference type="PathwayCommons" id="Q9H9S0"/>
<dbReference type="Reactome" id="R-HSA-2892245">
    <property type="pathway name" value="POU5F1 (OCT4), SOX2, NANOG repress genes related to differentiation"/>
</dbReference>
<dbReference type="Reactome" id="R-HSA-2892247">
    <property type="pathway name" value="POU5F1 (OCT4), SOX2, NANOG activate genes related to proliferation"/>
</dbReference>
<dbReference type="Reactome" id="R-HSA-452723">
    <property type="pathway name" value="Transcriptional regulation of pluripotent stem cells"/>
</dbReference>
<dbReference type="Reactome" id="R-HSA-6785807">
    <property type="pathway name" value="Interleukin-4 and Interleukin-13 signaling"/>
</dbReference>
<dbReference type="Reactome" id="R-HSA-9754189">
    <property type="pathway name" value="Germ layer formation at gastrulation"/>
</dbReference>
<dbReference type="Reactome" id="R-HSA-9823739">
    <property type="pathway name" value="Formation of the anterior neural plate"/>
</dbReference>
<dbReference type="Reactome" id="R-HSA-9827857">
    <property type="pathway name" value="Specification of primordial germ cells"/>
</dbReference>
<dbReference type="SignaLink" id="Q9H9S0"/>
<dbReference type="SIGNOR" id="Q9H9S0"/>
<dbReference type="BioGRID-ORCS" id="79923">
    <property type="hits" value="20 hits in 1103 CRISPR screens"/>
</dbReference>
<dbReference type="CD-CODE" id="20D775CC">
    <property type="entry name" value="Synthetic Condensate 000188"/>
</dbReference>
<dbReference type="CD-CODE" id="2217B16D">
    <property type="entry name" value="Synthetic Condensate 000173"/>
</dbReference>
<dbReference type="EvolutionaryTrace" id="Q9H9S0"/>
<dbReference type="GeneWiki" id="Homeobox_protein_NANOG"/>
<dbReference type="GenomeRNAi" id="79923"/>
<dbReference type="Pharos" id="Q9H9S0">
    <property type="development level" value="Tbio"/>
</dbReference>
<dbReference type="PRO" id="PR:Q9H9S0"/>
<dbReference type="Proteomes" id="UP000005640">
    <property type="component" value="Chromosome 12"/>
</dbReference>
<dbReference type="RNAct" id="Q9H9S0">
    <property type="molecule type" value="protein"/>
</dbReference>
<dbReference type="Bgee" id="ENSG00000111704">
    <property type="expression patterns" value="Expressed in primordial germ cell in gonad and 69 other cell types or tissues"/>
</dbReference>
<dbReference type="ExpressionAtlas" id="Q9H9S0">
    <property type="expression patterns" value="baseline and differential"/>
</dbReference>
<dbReference type="GO" id="GO:0000785">
    <property type="term" value="C:chromatin"/>
    <property type="evidence" value="ECO:0000247"/>
    <property type="project" value="NTNU_SB"/>
</dbReference>
<dbReference type="GO" id="GO:0043231">
    <property type="term" value="C:intracellular membrane-bounded organelle"/>
    <property type="evidence" value="ECO:0000314"/>
    <property type="project" value="HPA"/>
</dbReference>
<dbReference type="GO" id="GO:0005730">
    <property type="term" value="C:nucleolus"/>
    <property type="evidence" value="ECO:0000314"/>
    <property type="project" value="BHF-UCL"/>
</dbReference>
<dbReference type="GO" id="GO:0005654">
    <property type="term" value="C:nucleoplasm"/>
    <property type="evidence" value="ECO:0000314"/>
    <property type="project" value="HPA"/>
</dbReference>
<dbReference type="GO" id="GO:0005634">
    <property type="term" value="C:nucleus"/>
    <property type="evidence" value="ECO:0000314"/>
    <property type="project" value="BHF-UCL"/>
</dbReference>
<dbReference type="GO" id="GO:0003677">
    <property type="term" value="F:DNA binding"/>
    <property type="evidence" value="ECO:0000314"/>
    <property type="project" value="UniProtKB"/>
</dbReference>
<dbReference type="GO" id="GO:0003700">
    <property type="term" value="F:DNA-binding transcription factor activity"/>
    <property type="evidence" value="ECO:0000314"/>
    <property type="project" value="HGNC-UCL"/>
</dbReference>
<dbReference type="GO" id="GO:0000981">
    <property type="term" value="F:DNA-binding transcription factor activity, RNA polymerase II-specific"/>
    <property type="evidence" value="ECO:0000247"/>
    <property type="project" value="NTNU_SB"/>
</dbReference>
<dbReference type="GO" id="GO:0001227">
    <property type="term" value="F:DNA-binding transcription repressor activity, RNA polymerase II-specific"/>
    <property type="evidence" value="ECO:0000250"/>
    <property type="project" value="UniProtKB"/>
</dbReference>
<dbReference type="GO" id="GO:0000978">
    <property type="term" value="F:RNA polymerase II cis-regulatory region sequence-specific DNA binding"/>
    <property type="evidence" value="ECO:0000318"/>
    <property type="project" value="GO_Central"/>
</dbReference>
<dbReference type="GO" id="GO:0000977">
    <property type="term" value="F:RNA polymerase II transcription regulatory region sequence-specific DNA binding"/>
    <property type="evidence" value="ECO:0000314"/>
    <property type="project" value="NTNU_SB"/>
</dbReference>
<dbReference type="GO" id="GO:1990837">
    <property type="term" value="F:sequence-specific double-stranded DNA binding"/>
    <property type="evidence" value="ECO:0000314"/>
    <property type="project" value="ARUK-UCL"/>
</dbReference>
<dbReference type="GO" id="GO:0000976">
    <property type="term" value="F:transcription cis-regulatory region binding"/>
    <property type="evidence" value="ECO:0000314"/>
    <property type="project" value="UniProtKB"/>
</dbReference>
<dbReference type="GO" id="GO:0030154">
    <property type="term" value="P:cell differentiation"/>
    <property type="evidence" value="ECO:0000270"/>
    <property type="project" value="HGNC-UCL"/>
</dbReference>
<dbReference type="GO" id="GO:0001714">
    <property type="term" value="P:endodermal cell fate specification"/>
    <property type="evidence" value="ECO:0000314"/>
    <property type="project" value="MGI"/>
</dbReference>
<dbReference type="GO" id="GO:2000648">
    <property type="term" value="P:positive regulation of stem cell proliferation"/>
    <property type="evidence" value="ECO:0000315"/>
    <property type="project" value="HGNC-UCL"/>
</dbReference>
<dbReference type="GO" id="GO:0045944">
    <property type="term" value="P:positive regulation of transcription by RNA polymerase II"/>
    <property type="evidence" value="ECO:0000314"/>
    <property type="project" value="MGI"/>
</dbReference>
<dbReference type="GO" id="GO:0045595">
    <property type="term" value="P:regulation of cell differentiation"/>
    <property type="evidence" value="ECO:0000315"/>
    <property type="project" value="HGNC-UCL"/>
</dbReference>
<dbReference type="GO" id="GO:0006355">
    <property type="term" value="P:regulation of DNA-templated transcription"/>
    <property type="evidence" value="ECO:0000314"/>
    <property type="project" value="HGNC-UCL"/>
</dbReference>
<dbReference type="GO" id="GO:0010468">
    <property type="term" value="P:regulation of gene expression"/>
    <property type="evidence" value="ECO:0000315"/>
    <property type="project" value="UniProtKB"/>
</dbReference>
<dbReference type="GO" id="GO:0006357">
    <property type="term" value="P:regulation of transcription by RNA polymerase II"/>
    <property type="evidence" value="ECO:0000318"/>
    <property type="project" value="GO_Central"/>
</dbReference>
<dbReference type="GO" id="GO:0035019">
    <property type="term" value="P:somatic stem cell population maintenance"/>
    <property type="evidence" value="ECO:0000315"/>
    <property type="project" value="UniProtKB"/>
</dbReference>
<dbReference type="GO" id="GO:0019827">
    <property type="term" value="P:stem cell population maintenance"/>
    <property type="evidence" value="ECO:0000270"/>
    <property type="project" value="BHF-UCL"/>
</dbReference>
<dbReference type="CDD" id="cd00086">
    <property type="entry name" value="homeodomain"/>
    <property type="match status" value="1"/>
</dbReference>
<dbReference type="FunFam" id="1.10.10.60:FF:000203">
    <property type="entry name" value="Nanog homeobox transcription factor"/>
    <property type="match status" value="1"/>
</dbReference>
<dbReference type="Gene3D" id="1.10.10.60">
    <property type="entry name" value="Homeodomain-like"/>
    <property type="match status" value="1"/>
</dbReference>
<dbReference type="InterPro" id="IPR050460">
    <property type="entry name" value="Distal-less_Homeobox_TF"/>
</dbReference>
<dbReference type="InterPro" id="IPR001356">
    <property type="entry name" value="HD"/>
</dbReference>
<dbReference type="InterPro" id="IPR017970">
    <property type="entry name" value="Homeobox_CS"/>
</dbReference>
<dbReference type="InterPro" id="IPR009057">
    <property type="entry name" value="Homeodomain-like_sf"/>
</dbReference>
<dbReference type="PANTHER" id="PTHR24327">
    <property type="entry name" value="HOMEOBOX PROTEIN"/>
    <property type="match status" value="1"/>
</dbReference>
<dbReference type="PANTHER" id="PTHR24327:SF79">
    <property type="entry name" value="HOMEOBOX PROTEIN NANOG-RELATED"/>
    <property type="match status" value="1"/>
</dbReference>
<dbReference type="Pfam" id="PF00046">
    <property type="entry name" value="Homeodomain"/>
    <property type="match status" value="1"/>
</dbReference>
<dbReference type="SMART" id="SM00389">
    <property type="entry name" value="HOX"/>
    <property type="match status" value="1"/>
</dbReference>
<dbReference type="SUPFAM" id="SSF46689">
    <property type="entry name" value="Homeodomain-like"/>
    <property type="match status" value="1"/>
</dbReference>
<dbReference type="PROSITE" id="PS00027">
    <property type="entry name" value="HOMEOBOX_1"/>
    <property type="match status" value="1"/>
</dbReference>
<dbReference type="PROSITE" id="PS50071">
    <property type="entry name" value="HOMEOBOX_2"/>
    <property type="match status" value="1"/>
</dbReference>
<accession>Q9H9S0</accession>
<accession>D3DUU4</accession>
<accession>Q2TTG0</accession>
<accession>Q6JZS5</accession>
<organism>
    <name type="scientific">Homo sapiens</name>
    <name type="common">Human</name>
    <dbReference type="NCBI Taxonomy" id="9606"/>
    <lineage>
        <taxon>Eukaryota</taxon>
        <taxon>Metazoa</taxon>
        <taxon>Chordata</taxon>
        <taxon>Craniata</taxon>
        <taxon>Vertebrata</taxon>
        <taxon>Euteleostomi</taxon>
        <taxon>Mammalia</taxon>
        <taxon>Eutheria</taxon>
        <taxon>Euarchontoglires</taxon>
        <taxon>Primates</taxon>
        <taxon>Haplorrhini</taxon>
        <taxon>Catarrhini</taxon>
        <taxon>Hominidae</taxon>
        <taxon>Homo</taxon>
    </lineage>
</organism>
<sequence>MSVDPACPQSLPCFEASDCKESSPMPVICGPEENYPSLQMSSAEMPHTETVSPLPSSMDLLIQDSPDSSTSPKGKQPTSAEKSVAKKEDKVPVKKQKTRTVFSSTQLCVLNDRFQRQKYLSLQQMQELSNILNLSYKQVKTWFQNQRMKSKRWQKNNWPKNSNGVTQKASAPTYPSLYSSYHQGCLVNPTGNLPMWSNQTWNNSTWSNQTQNIQSWSNHSWNTQTWCTQSWNNQAWNSPFYNCGEESLQSCMQFQPNSPASDLEAALEAAGEGLNVIQQTTRYFSTPQTMDLFLNYSMNMQPEDV</sequence>
<proteinExistence type="evidence at protein level"/>
<name>NANOG_HUMAN</name>
<gene>
    <name type="primary">NANOG</name>
</gene>
<evidence type="ECO:0000250" key="1"/>
<evidence type="ECO:0000250" key="2">
    <source>
        <dbReference type="UniProtKB" id="Q80Z64"/>
    </source>
</evidence>
<evidence type="ECO:0000255" key="3">
    <source>
        <dbReference type="PROSITE-ProRule" id="PRU00108"/>
    </source>
</evidence>
<evidence type="ECO:0000256" key="4">
    <source>
        <dbReference type="SAM" id="MobiDB-lite"/>
    </source>
</evidence>
<evidence type="ECO:0000269" key="5">
    <source>
    </source>
</evidence>
<evidence type="ECO:0000269" key="6">
    <source>
    </source>
</evidence>
<evidence type="ECO:0000269" key="7">
    <source>
    </source>
</evidence>
<evidence type="ECO:0000269" key="8">
    <source>
    </source>
</evidence>
<evidence type="ECO:0000269" key="9">
    <source>
    </source>
</evidence>
<evidence type="ECO:0000269" key="10">
    <source>
    </source>
</evidence>
<evidence type="ECO:0000269" key="11">
    <source>
    </source>
</evidence>
<evidence type="ECO:0000269" key="12">
    <source>
    </source>
</evidence>
<evidence type="ECO:0000269" key="13">
    <source>
    </source>
</evidence>
<evidence type="ECO:0000269" key="14">
    <source>
    </source>
</evidence>
<evidence type="ECO:0000269" key="15">
    <source>
    </source>
</evidence>
<evidence type="ECO:0000269" key="16">
    <source>
    </source>
</evidence>
<evidence type="ECO:0000269" key="17">
    <source>
    </source>
</evidence>
<evidence type="ECO:0000269" key="18">
    <source ref="5"/>
</evidence>
<evidence type="ECO:0000303" key="19">
    <source>
    </source>
</evidence>
<evidence type="ECO:0000305" key="20"/>
<evidence type="ECO:0007829" key="21">
    <source>
        <dbReference type="PDB" id="2KT0"/>
    </source>
</evidence>
<evidence type="ECO:0007829" key="22">
    <source>
        <dbReference type="PDB" id="4RBO"/>
    </source>
</evidence>